<keyword id="KW-1003">Cell membrane</keyword>
<keyword id="KW-0472">Membrane</keyword>
<keyword id="KW-0520">NAD</keyword>
<keyword id="KW-0874">Quinone</keyword>
<keyword id="KW-1278">Translocase</keyword>
<keyword id="KW-0812">Transmembrane</keyword>
<keyword id="KW-1133">Transmembrane helix</keyword>
<keyword id="KW-0830">Ubiquinone</keyword>
<organism>
    <name type="scientific">Bacillus anthracis (strain CDC 684 / NRRL 3495)</name>
    <dbReference type="NCBI Taxonomy" id="568206"/>
    <lineage>
        <taxon>Bacteria</taxon>
        <taxon>Bacillati</taxon>
        <taxon>Bacillota</taxon>
        <taxon>Bacilli</taxon>
        <taxon>Bacillales</taxon>
        <taxon>Bacillaceae</taxon>
        <taxon>Bacillus</taxon>
        <taxon>Bacillus cereus group</taxon>
    </lineage>
</organism>
<evidence type="ECO:0000255" key="1">
    <source>
        <dbReference type="HAMAP-Rule" id="MF_01350"/>
    </source>
</evidence>
<protein>
    <recommendedName>
        <fullName evidence="1">NADH-quinone oxidoreductase subunit H</fullName>
        <ecNumber evidence="1">7.1.1.-</ecNumber>
    </recommendedName>
    <alternativeName>
        <fullName evidence="1">NADH dehydrogenase I subunit H</fullName>
    </alternativeName>
    <alternativeName>
        <fullName evidence="1">NDH-1 subunit H</fullName>
    </alternativeName>
</protein>
<proteinExistence type="inferred from homology"/>
<dbReference type="EC" id="7.1.1.-" evidence="1"/>
<dbReference type="EMBL" id="CP001215">
    <property type="protein sequence ID" value="ACP17284.1"/>
    <property type="molecule type" value="Genomic_DNA"/>
</dbReference>
<dbReference type="RefSeq" id="WP_000573430.1">
    <property type="nucleotide sequence ID" value="NC_012581.1"/>
</dbReference>
<dbReference type="SMR" id="C3LFH0"/>
<dbReference type="GeneID" id="93005827"/>
<dbReference type="KEGG" id="bah:BAMEG_5585"/>
<dbReference type="HOGENOM" id="CLU_015134_0_1_9"/>
<dbReference type="GO" id="GO:0005886">
    <property type="term" value="C:plasma membrane"/>
    <property type="evidence" value="ECO:0007669"/>
    <property type="project" value="UniProtKB-SubCell"/>
</dbReference>
<dbReference type="GO" id="GO:0003954">
    <property type="term" value="F:NADH dehydrogenase activity"/>
    <property type="evidence" value="ECO:0007669"/>
    <property type="project" value="TreeGrafter"/>
</dbReference>
<dbReference type="GO" id="GO:0016655">
    <property type="term" value="F:oxidoreductase activity, acting on NAD(P)H, quinone or similar compound as acceptor"/>
    <property type="evidence" value="ECO:0007669"/>
    <property type="project" value="UniProtKB-UniRule"/>
</dbReference>
<dbReference type="GO" id="GO:0048038">
    <property type="term" value="F:quinone binding"/>
    <property type="evidence" value="ECO:0007669"/>
    <property type="project" value="UniProtKB-KW"/>
</dbReference>
<dbReference type="GO" id="GO:0009060">
    <property type="term" value="P:aerobic respiration"/>
    <property type="evidence" value="ECO:0007669"/>
    <property type="project" value="TreeGrafter"/>
</dbReference>
<dbReference type="HAMAP" id="MF_01350">
    <property type="entry name" value="NDH1_NuoH"/>
    <property type="match status" value="1"/>
</dbReference>
<dbReference type="InterPro" id="IPR001694">
    <property type="entry name" value="NADH_UbQ_OxRdtase_su1/FPO"/>
</dbReference>
<dbReference type="InterPro" id="IPR018086">
    <property type="entry name" value="NADH_UbQ_OxRdtase_su1_CS"/>
</dbReference>
<dbReference type="NCBIfam" id="NF004741">
    <property type="entry name" value="PRK06076.1-2"/>
    <property type="match status" value="1"/>
</dbReference>
<dbReference type="PANTHER" id="PTHR11432">
    <property type="entry name" value="NADH DEHYDROGENASE SUBUNIT 1"/>
    <property type="match status" value="1"/>
</dbReference>
<dbReference type="PANTHER" id="PTHR11432:SF3">
    <property type="entry name" value="NADH-UBIQUINONE OXIDOREDUCTASE CHAIN 1"/>
    <property type="match status" value="1"/>
</dbReference>
<dbReference type="Pfam" id="PF00146">
    <property type="entry name" value="NADHdh"/>
    <property type="match status" value="1"/>
</dbReference>
<dbReference type="PROSITE" id="PS00668">
    <property type="entry name" value="COMPLEX1_ND1_2"/>
    <property type="match status" value="1"/>
</dbReference>
<name>NUOH_BACAC</name>
<feature type="chain" id="PRO_1000166618" description="NADH-quinone oxidoreductase subunit H">
    <location>
        <begin position="1"/>
        <end position="333"/>
    </location>
</feature>
<feature type="transmembrane region" description="Helical" evidence="1">
    <location>
        <begin position="15"/>
        <end position="35"/>
    </location>
</feature>
<feature type="transmembrane region" description="Helical" evidence="1">
    <location>
        <begin position="88"/>
        <end position="108"/>
    </location>
</feature>
<feature type="transmembrane region" description="Helical" evidence="1">
    <location>
        <begin position="117"/>
        <end position="137"/>
    </location>
</feature>
<feature type="transmembrane region" description="Helical" evidence="1">
    <location>
        <begin position="159"/>
        <end position="179"/>
    </location>
</feature>
<feature type="transmembrane region" description="Helical" evidence="1">
    <location>
        <begin position="191"/>
        <end position="211"/>
    </location>
</feature>
<feature type="transmembrane region" description="Helical" evidence="1">
    <location>
        <begin position="239"/>
        <end position="259"/>
    </location>
</feature>
<feature type="transmembrane region" description="Helical" evidence="1">
    <location>
        <begin position="274"/>
        <end position="296"/>
    </location>
</feature>
<feature type="transmembrane region" description="Helical" evidence="1">
    <location>
        <begin position="313"/>
        <end position="333"/>
    </location>
</feature>
<gene>
    <name evidence="1" type="primary">nuoH</name>
    <name type="ordered locus">BAMEG_5585</name>
</gene>
<accession>C3LFH0</accession>
<sequence>MIETLLQSPSSWTNFFIFFGLAVLLLFAVLGFVTYGILAERKVMGFMQGRIGPNQVGGRFGLLQTVADVLKLLLKEDSIPKAADKPLFILAPVIAFAPAFMVLAVIPFTDKFQFADIGVGLLYYIAVSGITTIGVVTGGWASNNKYSLLGGMRAAAQMISYEIPLVMSVIGIVLLAGSLNLNEIVAAQENVWYIFVQPIGFVVFLIAAVAELNRTPFDLPEAESELVSGYHTEYSGFRWAFFMLSEYVYFFGMASLITVLFLGGWNPVMFLGFIPGAVWFALKFSSVVFLLIWFRVTFPRIRGDQLMEFGWKVLLPIALANIFLTALIKELFF</sequence>
<reference key="1">
    <citation type="submission" date="2008-10" db="EMBL/GenBank/DDBJ databases">
        <title>Genome sequence of Bacillus anthracis str. CDC 684.</title>
        <authorList>
            <person name="Dodson R.J."/>
            <person name="Munk A.C."/>
            <person name="Brettin T."/>
            <person name="Bruce D."/>
            <person name="Detter C."/>
            <person name="Tapia R."/>
            <person name="Han C."/>
            <person name="Sutton G."/>
            <person name="Sims D."/>
        </authorList>
    </citation>
    <scope>NUCLEOTIDE SEQUENCE [LARGE SCALE GENOMIC DNA]</scope>
    <source>
        <strain>CDC 684 / NRRL 3495</strain>
    </source>
</reference>
<comment type="function">
    <text evidence="1">NDH-1 shuttles electrons from NADH, via FMN and iron-sulfur (Fe-S) centers, to quinones in the respiratory chain. The immediate electron acceptor for the enzyme in this species is believed to be ubiquinone. Couples the redox reaction to proton translocation (for every two electrons transferred, four hydrogen ions are translocated across the cytoplasmic membrane), and thus conserves the redox energy in a proton gradient. This subunit may bind ubiquinone.</text>
</comment>
<comment type="catalytic activity">
    <reaction evidence="1">
        <text>a quinone + NADH + 5 H(+)(in) = a quinol + NAD(+) + 4 H(+)(out)</text>
        <dbReference type="Rhea" id="RHEA:57888"/>
        <dbReference type="ChEBI" id="CHEBI:15378"/>
        <dbReference type="ChEBI" id="CHEBI:24646"/>
        <dbReference type="ChEBI" id="CHEBI:57540"/>
        <dbReference type="ChEBI" id="CHEBI:57945"/>
        <dbReference type="ChEBI" id="CHEBI:132124"/>
    </reaction>
</comment>
<comment type="subunit">
    <text evidence="1">NDH-1 is composed of 14 different subunits. Subunits NuoA, H, J, K, L, M, N constitute the membrane sector of the complex.</text>
</comment>
<comment type="subcellular location">
    <subcellularLocation>
        <location evidence="1">Cell membrane</location>
        <topology evidence="1">Multi-pass membrane protein</topology>
    </subcellularLocation>
</comment>
<comment type="similarity">
    <text evidence="1">Belongs to the complex I subunit 1 family.</text>
</comment>